<evidence type="ECO:0000255" key="1">
    <source>
        <dbReference type="HAMAP-Rule" id="MF_00171"/>
    </source>
</evidence>
<organism>
    <name type="scientific">Methylobacterium sp. (strain 4-46)</name>
    <dbReference type="NCBI Taxonomy" id="426117"/>
    <lineage>
        <taxon>Bacteria</taxon>
        <taxon>Pseudomonadati</taxon>
        <taxon>Pseudomonadota</taxon>
        <taxon>Alphaproteobacteria</taxon>
        <taxon>Hyphomicrobiales</taxon>
        <taxon>Methylobacteriaceae</taxon>
        <taxon>Methylobacterium</taxon>
    </lineage>
</organism>
<keyword id="KW-0413">Isomerase</keyword>
<keyword id="KW-0819">tRNA processing</keyword>
<proteinExistence type="inferred from homology"/>
<comment type="function">
    <text evidence="1">Formation of pseudouridine at positions 38, 39 and 40 in the anticodon stem and loop of transfer RNAs.</text>
</comment>
<comment type="catalytic activity">
    <reaction evidence="1">
        <text>uridine(38/39/40) in tRNA = pseudouridine(38/39/40) in tRNA</text>
        <dbReference type="Rhea" id="RHEA:22376"/>
        <dbReference type="Rhea" id="RHEA-COMP:10085"/>
        <dbReference type="Rhea" id="RHEA-COMP:10087"/>
        <dbReference type="ChEBI" id="CHEBI:65314"/>
        <dbReference type="ChEBI" id="CHEBI:65315"/>
        <dbReference type="EC" id="5.4.99.12"/>
    </reaction>
</comment>
<comment type="subunit">
    <text evidence="1">Homodimer.</text>
</comment>
<comment type="similarity">
    <text evidence="1">Belongs to the tRNA pseudouridine synthase TruA family.</text>
</comment>
<reference key="1">
    <citation type="submission" date="2008-02" db="EMBL/GenBank/DDBJ databases">
        <title>Complete sequence of chromosome of Methylobacterium sp. 4-46.</title>
        <authorList>
            <consortium name="US DOE Joint Genome Institute"/>
            <person name="Copeland A."/>
            <person name="Lucas S."/>
            <person name="Lapidus A."/>
            <person name="Glavina del Rio T."/>
            <person name="Dalin E."/>
            <person name="Tice H."/>
            <person name="Bruce D."/>
            <person name="Goodwin L."/>
            <person name="Pitluck S."/>
            <person name="Chertkov O."/>
            <person name="Brettin T."/>
            <person name="Detter J.C."/>
            <person name="Han C."/>
            <person name="Kuske C.R."/>
            <person name="Schmutz J."/>
            <person name="Larimer F."/>
            <person name="Land M."/>
            <person name="Hauser L."/>
            <person name="Kyrpides N."/>
            <person name="Ivanova N."/>
            <person name="Marx C.J."/>
            <person name="Richardson P."/>
        </authorList>
    </citation>
    <scope>NUCLEOTIDE SEQUENCE [LARGE SCALE GENOMIC DNA]</scope>
    <source>
        <strain>4-46</strain>
    </source>
</reference>
<feature type="chain" id="PRO_1000097763" description="tRNA pseudouridine synthase A">
    <location>
        <begin position="1"/>
        <end position="250"/>
    </location>
</feature>
<feature type="active site" description="Nucleophile" evidence="1">
    <location>
        <position position="52"/>
    </location>
</feature>
<feature type="binding site" evidence="1">
    <location>
        <position position="111"/>
    </location>
    <ligand>
        <name>substrate</name>
    </ligand>
</feature>
<gene>
    <name evidence="1" type="primary">truA</name>
    <name type="ordered locus">M446_4238</name>
</gene>
<name>TRUA_METS4</name>
<protein>
    <recommendedName>
        <fullName evidence="1">tRNA pseudouridine synthase A</fullName>
        <ecNumber evidence="1">5.4.99.12</ecNumber>
    </recommendedName>
    <alternativeName>
        <fullName evidence="1">tRNA pseudouridine(38-40) synthase</fullName>
    </alternativeName>
    <alternativeName>
        <fullName evidence="1">tRNA pseudouridylate synthase I</fullName>
    </alternativeName>
    <alternativeName>
        <fullName evidence="1">tRNA-uridine isomerase I</fullName>
    </alternativeName>
</protein>
<dbReference type="EC" id="5.4.99.12" evidence="1"/>
<dbReference type="EMBL" id="CP000943">
    <property type="protein sequence ID" value="ACA18587.1"/>
    <property type="molecule type" value="Genomic_DNA"/>
</dbReference>
<dbReference type="RefSeq" id="WP_012333978.1">
    <property type="nucleotide sequence ID" value="NC_010511.1"/>
</dbReference>
<dbReference type="SMR" id="B0UP40"/>
<dbReference type="STRING" id="426117.M446_4238"/>
<dbReference type="KEGG" id="met:M446_4238"/>
<dbReference type="eggNOG" id="COG0101">
    <property type="taxonomic scope" value="Bacteria"/>
</dbReference>
<dbReference type="HOGENOM" id="CLU_014673_0_2_5"/>
<dbReference type="GO" id="GO:0003723">
    <property type="term" value="F:RNA binding"/>
    <property type="evidence" value="ECO:0007669"/>
    <property type="project" value="InterPro"/>
</dbReference>
<dbReference type="GO" id="GO:0160147">
    <property type="term" value="F:tRNA pseudouridine(38-40) synthase activity"/>
    <property type="evidence" value="ECO:0007669"/>
    <property type="project" value="UniProtKB-EC"/>
</dbReference>
<dbReference type="GO" id="GO:0031119">
    <property type="term" value="P:tRNA pseudouridine synthesis"/>
    <property type="evidence" value="ECO:0007669"/>
    <property type="project" value="UniProtKB-UniRule"/>
</dbReference>
<dbReference type="CDD" id="cd02570">
    <property type="entry name" value="PseudoU_synth_EcTruA"/>
    <property type="match status" value="1"/>
</dbReference>
<dbReference type="FunFam" id="3.30.70.580:FF:000001">
    <property type="entry name" value="tRNA pseudouridine synthase A"/>
    <property type="match status" value="1"/>
</dbReference>
<dbReference type="Gene3D" id="3.30.70.660">
    <property type="entry name" value="Pseudouridine synthase I, catalytic domain, C-terminal subdomain"/>
    <property type="match status" value="1"/>
</dbReference>
<dbReference type="Gene3D" id="3.30.70.580">
    <property type="entry name" value="Pseudouridine synthase I, catalytic domain, N-terminal subdomain"/>
    <property type="match status" value="1"/>
</dbReference>
<dbReference type="HAMAP" id="MF_00171">
    <property type="entry name" value="TruA"/>
    <property type="match status" value="1"/>
</dbReference>
<dbReference type="InterPro" id="IPR020103">
    <property type="entry name" value="PsdUridine_synth_cat_dom_sf"/>
</dbReference>
<dbReference type="InterPro" id="IPR001406">
    <property type="entry name" value="PsdUridine_synth_TruA"/>
</dbReference>
<dbReference type="InterPro" id="IPR020097">
    <property type="entry name" value="PsdUridine_synth_TruA_a/b_dom"/>
</dbReference>
<dbReference type="InterPro" id="IPR020095">
    <property type="entry name" value="PsdUridine_synth_TruA_C"/>
</dbReference>
<dbReference type="InterPro" id="IPR020094">
    <property type="entry name" value="TruA/RsuA/RluB/E/F_N"/>
</dbReference>
<dbReference type="NCBIfam" id="TIGR00071">
    <property type="entry name" value="hisT_truA"/>
    <property type="match status" value="1"/>
</dbReference>
<dbReference type="PANTHER" id="PTHR11142">
    <property type="entry name" value="PSEUDOURIDYLATE SYNTHASE"/>
    <property type="match status" value="1"/>
</dbReference>
<dbReference type="PANTHER" id="PTHR11142:SF0">
    <property type="entry name" value="TRNA PSEUDOURIDINE SYNTHASE-LIKE 1"/>
    <property type="match status" value="1"/>
</dbReference>
<dbReference type="Pfam" id="PF01416">
    <property type="entry name" value="PseudoU_synth_1"/>
    <property type="match status" value="2"/>
</dbReference>
<dbReference type="PIRSF" id="PIRSF001430">
    <property type="entry name" value="tRNA_psdUrid_synth"/>
    <property type="match status" value="1"/>
</dbReference>
<dbReference type="SUPFAM" id="SSF55120">
    <property type="entry name" value="Pseudouridine synthase"/>
    <property type="match status" value="1"/>
</dbReference>
<accession>B0UP40</accession>
<sequence>MPRYKLVVEYDGSGFAGWQRQAADRTVQQALEEAIARFAGAPVRVHCAGRTDAGVHATHQVVHLDLDRDWRTDTVRDASNAHLRPEPVAVVSAERVRPDFDARHSALRRHYRYRILNRRSPPALGRAYLWHVPWSLDAHAMHAAAQTLLGRHDFSAFRAAECQANSPVRTLDQLDVARIGDEILVATSARSFLHHQVRGMVGTLMLAGCGRLDAAGVRAVLDSRDRTRCGPLAPAAGLTLTGVDYPEPGP</sequence>